<accession>Q5LZD1</accession>
<gene>
    <name evidence="1" type="primary">rnz</name>
    <name type="ordered locus">str1226</name>
</gene>
<organism>
    <name type="scientific">Streptococcus thermophilus (strain CNRZ 1066)</name>
    <dbReference type="NCBI Taxonomy" id="299768"/>
    <lineage>
        <taxon>Bacteria</taxon>
        <taxon>Bacillati</taxon>
        <taxon>Bacillota</taxon>
        <taxon>Bacilli</taxon>
        <taxon>Lactobacillales</taxon>
        <taxon>Streptococcaceae</taxon>
        <taxon>Streptococcus</taxon>
    </lineage>
</organism>
<name>RNZ_STRT1</name>
<feature type="chain" id="PRO_0000155912" description="Ribonuclease Z">
    <location>
        <begin position="1"/>
        <end position="309"/>
    </location>
</feature>
<feature type="active site" description="Proton acceptor" evidence="1">
    <location>
        <position position="67"/>
    </location>
</feature>
<feature type="binding site" evidence="1">
    <location>
        <position position="63"/>
    </location>
    <ligand>
        <name>Zn(2+)</name>
        <dbReference type="ChEBI" id="CHEBI:29105"/>
        <label>1</label>
        <note>catalytic</note>
    </ligand>
</feature>
<feature type="binding site" evidence="1">
    <location>
        <position position="65"/>
    </location>
    <ligand>
        <name>Zn(2+)</name>
        <dbReference type="ChEBI" id="CHEBI:29105"/>
        <label>1</label>
        <note>catalytic</note>
    </ligand>
</feature>
<feature type="binding site" evidence="1">
    <location>
        <position position="67"/>
    </location>
    <ligand>
        <name>Zn(2+)</name>
        <dbReference type="ChEBI" id="CHEBI:29105"/>
        <label>2</label>
        <note>catalytic</note>
    </ligand>
</feature>
<feature type="binding site" evidence="1">
    <location>
        <position position="68"/>
    </location>
    <ligand>
        <name>Zn(2+)</name>
        <dbReference type="ChEBI" id="CHEBI:29105"/>
        <label>2</label>
        <note>catalytic</note>
    </ligand>
</feature>
<feature type="binding site" evidence="1">
    <location>
        <position position="145"/>
    </location>
    <ligand>
        <name>Zn(2+)</name>
        <dbReference type="ChEBI" id="CHEBI:29105"/>
        <label>1</label>
        <note>catalytic</note>
    </ligand>
</feature>
<feature type="binding site" evidence="1">
    <location>
        <position position="216"/>
    </location>
    <ligand>
        <name>Zn(2+)</name>
        <dbReference type="ChEBI" id="CHEBI:29105"/>
        <label>1</label>
        <note>catalytic</note>
    </ligand>
</feature>
<feature type="binding site" evidence="1">
    <location>
        <position position="216"/>
    </location>
    <ligand>
        <name>Zn(2+)</name>
        <dbReference type="ChEBI" id="CHEBI:29105"/>
        <label>2</label>
        <note>catalytic</note>
    </ligand>
</feature>
<feature type="binding site" evidence="1">
    <location>
        <position position="274"/>
    </location>
    <ligand>
        <name>Zn(2+)</name>
        <dbReference type="ChEBI" id="CHEBI:29105"/>
        <label>2</label>
        <note>catalytic</note>
    </ligand>
</feature>
<proteinExistence type="inferred from homology"/>
<keyword id="KW-0255">Endonuclease</keyword>
<keyword id="KW-0378">Hydrolase</keyword>
<keyword id="KW-0479">Metal-binding</keyword>
<keyword id="KW-0540">Nuclease</keyword>
<keyword id="KW-0819">tRNA processing</keyword>
<keyword id="KW-0862">Zinc</keyword>
<evidence type="ECO:0000255" key="1">
    <source>
        <dbReference type="HAMAP-Rule" id="MF_01818"/>
    </source>
</evidence>
<reference key="1">
    <citation type="journal article" date="2004" name="Nat. Biotechnol.">
        <title>Complete sequence and comparative genome analysis of the dairy bacterium Streptococcus thermophilus.</title>
        <authorList>
            <person name="Bolotin A."/>
            <person name="Quinquis B."/>
            <person name="Renault P."/>
            <person name="Sorokin A."/>
            <person name="Ehrlich S.D."/>
            <person name="Kulakauskas S."/>
            <person name="Lapidus A."/>
            <person name="Goltsman E."/>
            <person name="Mazur M."/>
            <person name="Pusch G.D."/>
            <person name="Fonstein M."/>
            <person name="Overbeek R."/>
            <person name="Kyprides N."/>
            <person name="Purnelle B."/>
            <person name="Prozzi D."/>
            <person name="Ngui K."/>
            <person name="Masuy D."/>
            <person name="Hancy F."/>
            <person name="Burteau S."/>
            <person name="Boutry M."/>
            <person name="Delcour J."/>
            <person name="Goffeau A."/>
            <person name="Hols P."/>
        </authorList>
    </citation>
    <scope>NUCLEOTIDE SEQUENCE [LARGE SCALE GENOMIC DNA]</scope>
    <source>
        <strain>CNRZ 1066</strain>
    </source>
</reference>
<dbReference type="EC" id="3.1.26.11" evidence="1"/>
<dbReference type="EMBL" id="CP000024">
    <property type="protein sequence ID" value="AAV62771.1"/>
    <property type="molecule type" value="Genomic_DNA"/>
</dbReference>
<dbReference type="RefSeq" id="WP_011226135.1">
    <property type="nucleotide sequence ID" value="NC_006449.1"/>
</dbReference>
<dbReference type="SMR" id="Q5LZD1"/>
<dbReference type="GeneID" id="66899018"/>
<dbReference type="KEGG" id="stc:str1226"/>
<dbReference type="HOGENOM" id="CLU_031317_2_0_9"/>
<dbReference type="GO" id="GO:0042781">
    <property type="term" value="F:3'-tRNA processing endoribonuclease activity"/>
    <property type="evidence" value="ECO:0007669"/>
    <property type="project" value="UniProtKB-UniRule"/>
</dbReference>
<dbReference type="GO" id="GO:0008270">
    <property type="term" value="F:zinc ion binding"/>
    <property type="evidence" value="ECO:0007669"/>
    <property type="project" value="UniProtKB-UniRule"/>
</dbReference>
<dbReference type="CDD" id="cd07717">
    <property type="entry name" value="RNaseZ_ZiPD-like_MBL-fold"/>
    <property type="match status" value="1"/>
</dbReference>
<dbReference type="FunFam" id="3.60.15.10:FF:000002">
    <property type="entry name" value="Ribonuclease Z"/>
    <property type="match status" value="1"/>
</dbReference>
<dbReference type="Gene3D" id="3.60.15.10">
    <property type="entry name" value="Ribonuclease Z/Hydroxyacylglutathione hydrolase-like"/>
    <property type="match status" value="1"/>
</dbReference>
<dbReference type="HAMAP" id="MF_01818">
    <property type="entry name" value="RNase_Z_BN"/>
    <property type="match status" value="1"/>
</dbReference>
<dbReference type="InterPro" id="IPR001279">
    <property type="entry name" value="Metallo-B-lactamas"/>
</dbReference>
<dbReference type="InterPro" id="IPR036866">
    <property type="entry name" value="RibonucZ/Hydroxyglut_hydro"/>
</dbReference>
<dbReference type="InterPro" id="IPR013471">
    <property type="entry name" value="RNase_Z/BN"/>
</dbReference>
<dbReference type="NCBIfam" id="NF000801">
    <property type="entry name" value="PRK00055.1-3"/>
    <property type="match status" value="1"/>
</dbReference>
<dbReference type="NCBIfam" id="TIGR02651">
    <property type="entry name" value="RNase_Z"/>
    <property type="match status" value="1"/>
</dbReference>
<dbReference type="PANTHER" id="PTHR46018">
    <property type="entry name" value="ZINC PHOSPHODIESTERASE ELAC PROTEIN 1"/>
    <property type="match status" value="1"/>
</dbReference>
<dbReference type="PANTHER" id="PTHR46018:SF2">
    <property type="entry name" value="ZINC PHOSPHODIESTERASE ELAC PROTEIN 1"/>
    <property type="match status" value="1"/>
</dbReference>
<dbReference type="Pfam" id="PF00753">
    <property type="entry name" value="Lactamase_B"/>
    <property type="match status" value="1"/>
</dbReference>
<dbReference type="SUPFAM" id="SSF56281">
    <property type="entry name" value="Metallo-hydrolase/oxidoreductase"/>
    <property type="match status" value="1"/>
</dbReference>
<protein>
    <recommendedName>
        <fullName evidence="1">Ribonuclease Z</fullName>
        <shortName evidence="1">RNase Z</shortName>
        <ecNumber evidence="1">3.1.26.11</ecNumber>
    </recommendedName>
    <alternativeName>
        <fullName evidence="1">tRNA 3 endonuclease</fullName>
    </alternativeName>
    <alternativeName>
        <fullName evidence="1">tRNase Z</fullName>
    </alternativeName>
</protein>
<comment type="function">
    <text evidence="1">Zinc phosphodiesterase, which displays some tRNA 3'-processing endonuclease activity. Probably involved in tRNA maturation, by removing a 3'-trailer from precursor tRNA.</text>
</comment>
<comment type="catalytic activity">
    <reaction evidence="1">
        <text>Endonucleolytic cleavage of RNA, removing extra 3' nucleotides from tRNA precursor, generating 3' termini of tRNAs. A 3'-hydroxy group is left at the tRNA terminus and a 5'-phosphoryl group is left at the trailer molecule.</text>
        <dbReference type="EC" id="3.1.26.11"/>
    </reaction>
</comment>
<comment type="cofactor">
    <cofactor evidence="1">
        <name>Zn(2+)</name>
        <dbReference type="ChEBI" id="CHEBI:29105"/>
    </cofactor>
    <text evidence="1">Binds 2 Zn(2+) ions.</text>
</comment>
<comment type="subunit">
    <text evidence="1">Homodimer.</text>
</comment>
<comment type="similarity">
    <text evidence="1">Belongs to the RNase Z family.</text>
</comment>
<sequence>MELQFLGTGAGQPSKARNVSSLVLKLLDEINEVWMFDCGEGTQRQILETTIKPRKVKKIFITHMHGDHIFGLPGFLASRSFQSSEEQTDLEVYGPVGIKQYVMTSIRTSGTRLSYHVHFKEIDENSLGLVMEDDKFAVYADKLDHTIFCVGYRVVQKDLEGTLDAEALKAAGVPFGPLFGQIKNGQDVVLEDGTKIIAKDFISAPKKGKVITILGDTRKTNASVRLGLGADVLVHESTYGKGDEKIAKSHGHSTNMQAAQVARDASAKRLLLNHVSARFLGRDIGKMAADAKTIFENTHIVRDLEEVEI</sequence>